<organism>
    <name type="scientific">Zaire ebolavirus (strain Gabon-94)</name>
    <name type="common">ZEBOV</name>
    <name type="synonym">Zaire Ebola virus</name>
    <dbReference type="NCBI Taxonomy" id="128947"/>
    <lineage>
        <taxon>Viruses</taxon>
        <taxon>Riboviria</taxon>
        <taxon>Orthornavirae</taxon>
        <taxon>Negarnaviricota</taxon>
        <taxon>Haploviricotina</taxon>
        <taxon>Monjiviricetes</taxon>
        <taxon>Mononegavirales</taxon>
        <taxon>Filoviridae</taxon>
        <taxon>Orthoebolavirus</taxon>
        <taxon>Orthoebolavirus zairense</taxon>
        <taxon>Zaire ebolavirus</taxon>
    </lineage>
</organism>
<evidence type="ECO:0000250" key="1"/>
<evidence type="ECO:0000250" key="2">
    <source>
        <dbReference type="UniProtKB" id="Q05322"/>
    </source>
</evidence>
<evidence type="ECO:0000305" key="3"/>
<protein>
    <recommendedName>
        <fullName>Membrane-associated protein VP24</fullName>
    </recommendedName>
    <alternativeName>
        <fullName>Ebola VP24</fullName>
        <shortName>eVP24</shortName>
    </alternativeName>
</protein>
<comment type="function">
    <text evidence="2">Prevents the establishment of cellular antiviral state by blocking the interferon-alpha/beta (IFN-alpha/beta) and IFN-gamma signaling pathways. Blocks the IFN-induced nuclear accumulation of host phosphorylated STAT1 by interacting with the STAT1-binding region of host importins. Alternatively also interacts directly with host STAT1 and may additionally inhibit its non-phosphorylated form. Plays a role in assembly of viral nucleocapsid and virion budding. May act as a minor matrix protein that plays a role in assembly of viral nucleocapsid and virion budding.</text>
</comment>
<comment type="subunit">
    <text evidence="2">Interacts with host importins KPNA1, KPNA5 and KPNA6. Interacts with host STAT1. Interacts with host KEAP1; this interaction activates host transcription factor NRF2 by blocking its interaction with KEAP1.</text>
</comment>
<comment type="subcellular location">
    <subcellularLocation>
        <location evidence="2">Virion membrane</location>
        <topology evidence="2">Peripheral membrane protein</topology>
    </subcellularLocation>
    <subcellularLocation>
        <location evidence="2">Host cell membrane</location>
        <topology evidence="2">Peripheral membrane protein</topology>
        <orientation evidence="2">Cytoplasmic side</orientation>
    </subcellularLocation>
    <subcellularLocation>
        <location evidence="2">Host endomembrane system</location>
        <topology evidence="2">Peripheral membrane protein</topology>
    </subcellularLocation>
    <text evidence="1">In virion, localizes on the intravirional side of the membrane. In the host cell, it is found associated with virus-induced membrane proliferation foci and to the plasma membrane where budding takes place (By similarity).</text>
</comment>
<comment type="similarity">
    <text evidence="3">Belongs to the filoviridae membrane-associated protein VP24 family.</text>
</comment>
<gene>
    <name type="primary">VP24</name>
</gene>
<feature type="chain" id="PRO_0000222155" description="Membrane-associated protein VP24">
    <location>
        <begin position="1"/>
        <end position="251"/>
    </location>
</feature>
<sequence>MAKATGRYNLISPKKDLEKGVVLSDLCNFLVSQTIQGWKVYWAGIEFDVTHKGMALLHRLKTNDFAPAWSMTRNLFPHLFQNPNSTIESPLWALRVILAAGIQDQLIDQSLIEPLAGALGLISDWLLTTNTNHFNMRTQRVKEQLSLKMLSLIRSNILKFINKLDALHVVNYNGLLSSIEIGTQNHTIIITRTNMGFLVELQEPDKSAMNRKKPGPAKFSLLHESTLKAFTQGSSTRMQSLILEFNSSLAI</sequence>
<dbReference type="EMBL" id="U77385">
    <property type="protein sequence ID" value="AAC57991.1"/>
    <property type="molecule type" value="Genomic_RNA"/>
</dbReference>
<dbReference type="EMBL" id="AY058897">
    <property type="protein sequence ID" value="AAL25817.1"/>
    <property type="molecule type" value="mRNA"/>
</dbReference>
<dbReference type="SMR" id="O11459"/>
<dbReference type="GO" id="GO:0033645">
    <property type="term" value="C:host cell endomembrane system"/>
    <property type="evidence" value="ECO:0007669"/>
    <property type="project" value="UniProtKB-SubCell"/>
</dbReference>
<dbReference type="GO" id="GO:0020002">
    <property type="term" value="C:host cell plasma membrane"/>
    <property type="evidence" value="ECO:0007669"/>
    <property type="project" value="UniProtKB-SubCell"/>
</dbReference>
<dbReference type="GO" id="GO:0016020">
    <property type="term" value="C:membrane"/>
    <property type="evidence" value="ECO:0007669"/>
    <property type="project" value="UniProtKB-KW"/>
</dbReference>
<dbReference type="GO" id="GO:0055036">
    <property type="term" value="C:virion membrane"/>
    <property type="evidence" value="ECO:0007669"/>
    <property type="project" value="UniProtKB-SubCell"/>
</dbReference>
<dbReference type="GO" id="GO:0005198">
    <property type="term" value="F:structural molecule activity"/>
    <property type="evidence" value="ECO:0007669"/>
    <property type="project" value="InterPro"/>
</dbReference>
<dbReference type="GO" id="GO:0052170">
    <property type="term" value="P:symbiont-mediated suppression of host innate immune response"/>
    <property type="evidence" value="ECO:0007669"/>
    <property type="project" value="UniProtKB-KW"/>
</dbReference>
<dbReference type="GO" id="GO:0016032">
    <property type="term" value="P:viral process"/>
    <property type="evidence" value="ECO:0007669"/>
    <property type="project" value="InterPro"/>
</dbReference>
<dbReference type="InterPro" id="IPR009433">
    <property type="entry name" value="Filo_VP24"/>
</dbReference>
<dbReference type="Pfam" id="PF06389">
    <property type="entry name" value="Filo_VP24"/>
    <property type="match status" value="1"/>
</dbReference>
<dbReference type="PIRSF" id="PIRSF011355">
    <property type="entry name" value="VP24"/>
    <property type="match status" value="1"/>
</dbReference>
<accession>O11459</accession>
<accession>Q6YNP9</accession>
<organismHost>
    <name type="scientific">Epomops franqueti</name>
    <name type="common">Franquet's epauletted fruit bat</name>
    <name type="synonym">Epomophorus franqueti</name>
    <dbReference type="NCBI Taxonomy" id="77231"/>
</organismHost>
<organismHost>
    <name type="scientific">Homo sapiens</name>
    <name type="common">Human</name>
    <dbReference type="NCBI Taxonomy" id="9606"/>
</organismHost>
<organismHost>
    <name type="scientific">Myonycteris torquata</name>
    <name type="common">Little collared fruit bat</name>
    <dbReference type="NCBI Taxonomy" id="77243"/>
</organismHost>
<keyword id="KW-1032">Host cell membrane</keyword>
<keyword id="KW-1043">Host membrane</keyword>
<keyword id="KW-0945">Host-virus interaction</keyword>
<keyword id="KW-1090">Inhibition of host innate immune response by virus</keyword>
<keyword id="KW-0922">Interferon antiviral system evasion</keyword>
<keyword id="KW-0472">Membrane</keyword>
<keyword id="KW-0899">Viral immunoevasion</keyword>
<keyword id="KW-0946">Virion</keyword>
<proteinExistence type="evidence at transcript level"/>
<reference key="1">
    <citation type="journal article" date="1997" name="Virology">
        <title>Emergence of subtype Zaire Ebola virus in Gabon.</title>
        <authorList>
            <person name="Volchkov V."/>
            <person name="Volchkova V."/>
            <person name="Eckel C."/>
            <person name="Klenk H.-D."/>
            <person name="Bouloy M."/>
            <person name="Leguenno B."/>
            <person name="Feldmann H."/>
        </authorList>
    </citation>
    <scope>NUCLEOTIDE SEQUENCE [GENOMIC RNA]</scope>
</reference>
<reference key="2">
    <citation type="journal article" date="2002" name="J. Gen. Virol.">
        <title>Sequence analysis of the GP, NP, VP40 and VP24 genes of Ebola virus isolated from deceased, surviving and asymptomatically infected individuals during the 1996 outbreak in Gabon: comparative studies and phylogenetic characterization.</title>
        <authorList>
            <person name="Leroy E.M."/>
            <person name="Baize S."/>
            <person name="Mavoungou E."/>
            <person name="Apetrei C."/>
        </authorList>
    </citation>
    <scope>NUCLEOTIDE SEQUENCE [MRNA]</scope>
    <source>
        <strain>Isolate Bouee-96</strain>
    </source>
</reference>
<name>VP24_EBOG4</name>